<gene>
    <name evidence="1" type="primary">murA</name>
    <name type="ordered locus">NGR_c02220</name>
</gene>
<feature type="chain" id="PRO_1000119121" description="UDP-N-acetylglucosamine 1-carboxyvinyltransferase">
    <location>
        <begin position="1"/>
        <end position="430"/>
    </location>
</feature>
<feature type="active site" description="Proton donor" evidence="1">
    <location>
        <position position="126"/>
    </location>
</feature>
<feature type="binding site" evidence="1">
    <location>
        <begin position="22"/>
        <end position="23"/>
    </location>
    <ligand>
        <name>phosphoenolpyruvate</name>
        <dbReference type="ChEBI" id="CHEBI:58702"/>
    </ligand>
</feature>
<feature type="binding site" evidence="1">
    <location>
        <position position="102"/>
    </location>
    <ligand>
        <name>UDP-N-acetyl-alpha-D-glucosamine</name>
        <dbReference type="ChEBI" id="CHEBI:57705"/>
    </ligand>
</feature>
<feature type="binding site" evidence="1">
    <location>
        <begin position="131"/>
        <end position="135"/>
    </location>
    <ligand>
        <name>UDP-N-acetyl-alpha-D-glucosamine</name>
        <dbReference type="ChEBI" id="CHEBI:57705"/>
    </ligand>
</feature>
<feature type="binding site" evidence="1">
    <location>
        <begin position="172"/>
        <end position="175"/>
    </location>
    <ligand>
        <name>UDP-N-acetyl-alpha-D-glucosamine</name>
        <dbReference type="ChEBI" id="CHEBI:57705"/>
    </ligand>
</feature>
<feature type="binding site" evidence="1">
    <location>
        <position position="317"/>
    </location>
    <ligand>
        <name>UDP-N-acetyl-alpha-D-glucosamine</name>
        <dbReference type="ChEBI" id="CHEBI:57705"/>
    </ligand>
</feature>
<feature type="binding site" evidence="1">
    <location>
        <position position="339"/>
    </location>
    <ligand>
        <name>UDP-N-acetyl-alpha-D-glucosamine</name>
        <dbReference type="ChEBI" id="CHEBI:57705"/>
    </ligand>
</feature>
<feature type="modified residue" description="2-(S-cysteinyl)pyruvic acid O-phosphothioketal" evidence="1">
    <location>
        <position position="126"/>
    </location>
</feature>
<proteinExistence type="inferred from homology"/>
<organism>
    <name type="scientific">Sinorhizobium fredii (strain NBRC 101917 / NGR234)</name>
    <dbReference type="NCBI Taxonomy" id="394"/>
    <lineage>
        <taxon>Bacteria</taxon>
        <taxon>Pseudomonadati</taxon>
        <taxon>Pseudomonadota</taxon>
        <taxon>Alphaproteobacteria</taxon>
        <taxon>Hyphomicrobiales</taxon>
        <taxon>Rhizobiaceae</taxon>
        <taxon>Sinorhizobium/Ensifer group</taxon>
        <taxon>Sinorhizobium</taxon>
    </lineage>
</organism>
<protein>
    <recommendedName>
        <fullName evidence="1">UDP-N-acetylglucosamine 1-carboxyvinyltransferase</fullName>
        <ecNumber evidence="1">2.5.1.7</ecNumber>
    </recommendedName>
    <alternativeName>
        <fullName evidence="1">Enoylpyruvate transferase</fullName>
    </alternativeName>
    <alternativeName>
        <fullName evidence="1">UDP-N-acetylglucosamine enolpyruvyl transferase</fullName>
        <shortName evidence="1">EPT</shortName>
    </alternativeName>
</protein>
<name>MURA_SINFN</name>
<keyword id="KW-0131">Cell cycle</keyword>
<keyword id="KW-0132">Cell division</keyword>
<keyword id="KW-0133">Cell shape</keyword>
<keyword id="KW-0961">Cell wall biogenesis/degradation</keyword>
<keyword id="KW-0963">Cytoplasm</keyword>
<keyword id="KW-0573">Peptidoglycan synthesis</keyword>
<keyword id="KW-0670">Pyruvate</keyword>
<keyword id="KW-1185">Reference proteome</keyword>
<keyword id="KW-0808">Transferase</keyword>
<reference key="1">
    <citation type="journal article" date="2009" name="Appl. Environ. Microbiol.">
        <title>Rhizobium sp. strain NGR234 possesses a remarkable number of secretion systems.</title>
        <authorList>
            <person name="Schmeisser C."/>
            <person name="Liesegang H."/>
            <person name="Krysciak D."/>
            <person name="Bakkou N."/>
            <person name="Le Quere A."/>
            <person name="Wollherr A."/>
            <person name="Heinemeyer I."/>
            <person name="Morgenstern B."/>
            <person name="Pommerening-Roeser A."/>
            <person name="Flores M."/>
            <person name="Palacios R."/>
            <person name="Brenner S."/>
            <person name="Gottschalk G."/>
            <person name="Schmitz R.A."/>
            <person name="Broughton W.J."/>
            <person name="Perret X."/>
            <person name="Strittmatter A.W."/>
            <person name="Streit W.R."/>
        </authorList>
    </citation>
    <scope>NUCLEOTIDE SEQUENCE [LARGE SCALE GENOMIC DNA]</scope>
    <source>
        <strain>NBRC 101917 / NGR234</strain>
    </source>
</reference>
<comment type="function">
    <text evidence="1">Cell wall formation. Adds enolpyruvyl to UDP-N-acetylglucosamine.</text>
</comment>
<comment type="catalytic activity">
    <reaction evidence="1">
        <text>phosphoenolpyruvate + UDP-N-acetyl-alpha-D-glucosamine = UDP-N-acetyl-3-O-(1-carboxyvinyl)-alpha-D-glucosamine + phosphate</text>
        <dbReference type="Rhea" id="RHEA:18681"/>
        <dbReference type="ChEBI" id="CHEBI:43474"/>
        <dbReference type="ChEBI" id="CHEBI:57705"/>
        <dbReference type="ChEBI" id="CHEBI:58702"/>
        <dbReference type="ChEBI" id="CHEBI:68483"/>
        <dbReference type="EC" id="2.5.1.7"/>
    </reaction>
</comment>
<comment type="pathway">
    <text evidence="1">Cell wall biogenesis; peptidoglycan biosynthesis.</text>
</comment>
<comment type="subcellular location">
    <subcellularLocation>
        <location evidence="1">Cytoplasm</location>
    </subcellularLocation>
</comment>
<comment type="similarity">
    <text evidence="1">Belongs to the EPSP synthase family. MurA subfamily.</text>
</comment>
<sequence>MDRIRIVGGNQLHGVIPISGAKNAALPLMIASLLTDDTLTLENVPHLADVEQLIRILGNHGADISVNGRRERQGESYARTIHFTSRNIVSTTAPYELVSKMRASFWVIGPLLAREGKARVSLPGGCAIGTRPVDLFIEGLTALGANIEIDGGYVNATAPEGGLTGGRYVFPKVSVGATHVLMMAATLANGTTVIGNAAREPEVADLAKCLNAMGAKITGAGTGTITIEGVRSLSGARHRVLPDRIETGTYAMAVAMTGGDVILEDTEASLLDTALEAIRRAGAEISETNSGIRVVRNGAGIRPVDIVTDPFPGFPTDLQAQFMGLMTKSSGVSHITETIFENRFMHVQELARLGAKISLSGQTAKIEGVGRLKGAPVMATDLRASVSLVIAGLAAEGETMVSRVYHLDRGFERLEEKLTRCGAHVERVSD</sequence>
<accession>C3MFX0</accession>
<dbReference type="EC" id="2.5.1.7" evidence="1"/>
<dbReference type="EMBL" id="CP001389">
    <property type="protein sequence ID" value="ACP24021.1"/>
    <property type="molecule type" value="Genomic_DNA"/>
</dbReference>
<dbReference type="RefSeq" id="WP_012706806.1">
    <property type="nucleotide sequence ID" value="NC_012587.1"/>
</dbReference>
<dbReference type="RefSeq" id="YP_002824774.1">
    <property type="nucleotide sequence ID" value="NC_012587.1"/>
</dbReference>
<dbReference type="SMR" id="C3MFX0"/>
<dbReference type="STRING" id="394.NGR_c02220"/>
<dbReference type="GeneID" id="48971744"/>
<dbReference type="KEGG" id="rhi:NGR_c02220"/>
<dbReference type="PATRIC" id="fig|394.7.peg.3022"/>
<dbReference type="eggNOG" id="COG0766">
    <property type="taxonomic scope" value="Bacteria"/>
</dbReference>
<dbReference type="HOGENOM" id="CLU_027387_0_0_5"/>
<dbReference type="OrthoDB" id="9803760at2"/>
<dbReference type="UniPathway" id="UPA00219"/>
<dbReference type="Proteomes" id="UP000001054">
    <property type="component" value="Chromosome"/>
</dbReference>
<dbReference type="GO" id="GO:0005737">
    <property type="term" value="C:cytoplasm"/>
    <property type="evidence" value="ECO:0007669"/>
    <property type="project" value="UniProtKB-SubCell"/>
</dbReference>
<dbReference type="GO" id="GO:0008760">
    <property type="term" value="F:UDP-N-acetylglucosamine 1-carboxyvinyltransferase activity"/>
    <property type="evidence" value="ECO:0007669"/>
    <property type="project" value="UniProtKB-UniRule"/>
</dbReference>
<dbReference type="GO" id="GO:0051301">
    <property type="term" value="P:cell division"/>
    <property type="evidence" value="ECO:0007669"/>
    <property type="project" value="UniProtKB-KW"/>
</dbReference>
<dbReference type="GO" id="GO:0071555">
    <property type="term" value="P:cell wall organization"/>
    <property type="evidence" value="ECO:0007669"/>
    <property type="project" value="UniProtKB-KW"/>
</dbReference>
<dbReference type="GO" id="GO:0009252">
    <property type="term" value="P:peptidoglycan biosynthetic process"/>
    <property type="evidence" value="ECO:0007669"/>
    <property type="project" value="UniProtKB-UniRule"/>
</dbReference>
<dbReference type="GO" id="GO:0008360">
    <property type="term" value="P:regulation of cell shape"/>
    <property type="evidence" value="ECO:0007669"/>
    <property type="project" value="UniProtKB-KW"/>
</dbReference>
<dbReference type="GO" id="GO:0019277">
    <property type="term" value="P:UDP-N-acetylgalactosamine biosynthetic process"/>
    <property type="evidence" value="ECO:0007669"/>
    <property type="project" value="InterPro"/>
</dbReference>
<dbReference type="CDD" id="cd01555">
    <property type="entry name" value="UdpNAET"/>
    <property type="match status" value="1"/>
</dbReference>
<dbReference type="FunFam" id="3.65.10.10:FF:000001">
    <property type="entry name" value="UDP-N-acetylglucosamine 1-carboxyvinyltransferase"/>
    <property type="match status" value="1"/>
</dbReference>
<dbReference type="Gene3D" id="3.65.10.10">
    <property type="entry name" value="Enolpyruvate transferase domain"/>
    <property type="match status" value="2"/>
</dbReference>
<dbReference type="HAMAP" id="MF_00111">
    <property type="entry name" value="MurA"/>
    <property type="match status" value="1"/>
</dbReference>
<dbReference type="InterPro" id="IPR001986">
    <property type="entry name" value="Enolpyruvate_Tfrase_dom"/>
</dbReference>
<dbReference type="InterPro" id="IPR036968">
    <property type="entry name" value="Enolpyruvate_Tfrase_sf"/>
</dbReference>
<dbReference type="InterPro" id="IPR050068">
    <property type="entry name" value="MurA_subfamily"/>
</dbReference>
<dbReference type="InterPro" id="IPR013792">
    <property type="entry name" value="RNA3'P_cycl/enolpyr_Trfase_a/b"/>
</dbReference>
<dbReference type="InterPro" id="IPR005750">
    <property type="entry name" value="UDP_GlcNAc_COvinyl_MurA"/>
</dbReference>
<dbReference type="NCBIfam" id="TIGR01072">
    <property type="entry name" value="murA"/>
    <property type="match status" value="1"/>
</dbReference>
<dbReference type="NCBIfam" id="NF006873">
    <property type="entry name" value="PRK09369.1"/>
    <property type="match status" value="1"/>
</dbReference>
<dbReference type="PANTHER" id="PTHR43783">
    <property type="entry name" value="UDP-N-ACETYLGLUCOSAMINE 1-CARBOXYVINYLTRANSFERASE"/>
    <property type="match status" value="1"/>
</dbReference>
<dbReference type="PANTHER" id="PTHR43783:SF1">
    <property type="entry name" value="UDP-N-ACETYLGLUCOSAMINE 1-CARBOXYVINYLTRANSFERASE"/>
    <property type="match status" value="1"/>
</dbReference>
<dbReference type="Pfam" id="PF00275">
    <property type="entry name" value="EPSP_synthase"/>
    <property type="match status" value="1"/>
</dbReference>
<dbReference type="SUPFAM" id="SSF55205">
    <property type="entry name" value="EPT/RTPC-like"/>
    <property type="match status" value="1"/>
</dbReference>
<evidence type="ECO:0000255" key="1">
    <source>
        <dbReference type="HAMAP-Rule" id="MF_00111"/>
    </source>
</evidence>